<name>GSM1_CANAW</name>
<proteinExistence type="inferred from homology"/>
<comment type="function">
    <text evidence="1">Transcription factor which regulates nonfermentable carbon utilization.</text>
</comment>
<comment type="subcellular location">
    <subcellularLocation>
        <location evidence="2">Nucleus</location>
    </subcellularLocation>
</comment>
<comment type="similarity">
    <text evidence="4">Belongs to the ERT1/acuK family.</text>
</comment>
<evidence type="ECO:0000250" key="1"/>
<evidence type="ECO:0000255" key="2">
    <source>
        <dbReference type="PROSITE-ProRule" id="PRU00227"/>
    </source>
</evidence>
<evidence type="ECO:0000256" key="3">
    <source>
        <dbReference type="SAM" id="MobiDB-lite"/>
    </source>
</evidence>
<evidence type="ECO:0000305" key="4"/>
<accession>C4YDV1</accession>
<protein>
    <recommendedName>
        <fullName>Glucose starvation modulator protein 1</fullName>
    </recommendedName>
</protein>
<sequence>MTKKLTPQEKKNRKPAVRACVFCHQKHLQCSNERPCKNCVKRNIAHGCQDIVRKRVKYLTGEGVPGAVSNKQSTPRKKLKTSPVSTSVSPMDSVKSELATPVESSNHFPPPMSSSVDALPTTQHSAIEIPPNDQPISDILEVPPLFDSSHMISSEAPETNITLTTQNLITPDPLSFHTNTVSNTTTDVLNKLLNDNYETESILSANNSNGDHLLGMAHTSSGHLSNGQQFQSNYLNEEYMMLGDIILQSKQASPSPSNTSTSENNTNTLSPSSFGYISNINFEDFNQPKRKVVQKLKDSRPFISLGFTADLAPHDNNNNTDYYDDKMTNNITGKTEEGPGNPIINYNTKFTTDYVPPSITNNLYKTASDLYSKELKNFYYPLSYHALTKLLKVIFGGNDLSPEEKQEKRSKLLIILKLIASYRPTFIAAHRDLIQEDLLMLEMTLQRSLLDYKKLAELNSSPTIMWRRTGEIISITEDMALLLEHSSFDLLKERRFIFELMDDNSIVDYFNLFANIAVGNLKSVIQTAIQMKTKSSNLIKFTCVFTIKRDIFDIPMIVIGQFLPIV</sequence>
<keyword id="KW-0238">DNA-binding</keyword>
<keyword id="KW-0479">Metal-binding</keyword>
<keyword id="KW-0539">Nucleus</keyword>
<keyword id="KW-0804">Transcription</keyword>
<keyword id="KW-0805">Transcription regulation</keyword>
<keyword id="KW-0862">Zinc</keyword>
<dbReference type="EMBL" id="CH672346">
    <property type="protein sequence ID" value="EEQ42487.1"/>
    <property type="molecule type" value="Genomic_DNA"/>
</dbReference>
<dbReference type="PaxDb" id="5476-C4YDV1"/>
<dbReference type="VEuPathDB" id="FungiDB:CAWG_00699"/>
<dbReference type="HOGENOM" id="CLU_010748_2_2_1"/>
<dbReference type="OMA" id="FCHEKHL"/>
<dbReference type="OrthoDB" id="22465at766764"/>
<dbReference type="Proteomes" id="UP000001429">
    <property type="component" value="Chromosome 1, Supercontig 1.1"/>
</dbReference>
<dbReference type="GO" id="GO:0005634">
    <property type="term" value="C:nucleus"/>
    <property type="evidence" value="ECO:0007669"/>
    <property type="project" value="UniProtKB-SubCell"/>
</dbReference>
<dbReference type="GO" id="GO:0000981">
    <property type="term" value="F:DNA-binding transcription factor activity, RNA polymerase II-specific"/>
    <property type="evidence" value="ECO:0007669"/>
    <property type="project" value="InterPro"/>
</dbReference>
<dbReference type="GO" id="GO:0000977">
    <property type="term" value="F:RNA polymerase II transcription regulatory region sequence-specific DNA binding"/>
    <property type="evidence" value="ECO:0007669"/>
    <property type="project" value="TreeGrafter"/>
</dbReference>
<dbReference type="GO" id="GO:0008270">
    <property type="term" value="F:zinc ion binding"/>
    <property type="evidence" value="ECO:0007669"/>
    <property type="project" value="InterPro"/>
</dbReference>
<dbReference type="GO" id="GO:0009267">
    <property type="term" value="P:cellular response to starvation"/>
    <property type="evidence" value="ECO:0007669"/>
    <property type="project" value="TreeGrafter"/>
</dbReference>
<dbReference type="CDD" id="cd00067">
    <property type="entry name" value="GAL4"/>
    <property type="match status" value="1"/>
</dbReference>
<dbReference type="InterPro" id="IPR050335">
    <property type="entry name" value="ERT1_acuK_gluconeogen_tf"/>
</dbReference>
<dbReference type="InterPro" id="IPR056751">
    <property type="entry name" value="PAS_13"/>
</dbReference>
<dbReference type="InterPro" id="IPR036864">
    <property type="entry name" value="Zn2-C6_fun-type_DNA-bd_sf"/>
</dbReference>
<dbReference type="InterPro" id="IPR001138">
    <property type="entry name" value="Zn2Cys6_DnaBD"/>
</dbReference>
<dbReference type="PANTHER" id="PTHR47659:SF8">
    <property type="entry name" value="GLUCOSE STARVATION MODULATOR PROTEIN 1"/>
    <property type="match status" value="1"/>
</dbReference>
<dbReference type="PANTHER" id="PTHR47659">
    <property type="entry name" value="ZN(II)2CYS6 TRANSCRIPTION FACTOR (EUROFUNG)-RELATED"/>
    <property type="match status" value="1"/>
</dbReference>
<dbReference type="Pfam" id="PF24990">
    <property type="entry name" value="PAS_13"/>
    <property type="match status" value="1"/>
</dbReference>
<dbReference type="Pfam" id="PF00172">
    <property type="entry name" value="Zn_clus"/>
    <property type="match status" value="1"/>
</dbReference>
<dbReference type="SMART" id="SM00066">
    <property type="entry name" value="GAL4"/>
    <property type="match status" value="1"/>
</dbReference>
<dbReference type="SUPFAM" id="SSF57701">
    <property type="entry name" value="Zn2/Cys6 DNA-binding domain"/>
    <property type="match status" value="1"/>
</dbReference>
<dbReference type="PROSITE" id="PS00463">
    <property type="entry name" value="ZN2_CY6_FUNGAL_1"/>
    <property type="match status" value="1"/>
</dbReference>
<dbReference type="PROSITE" id="PS50048">
    <property type="entry name" value="ZN2_CY6_FUNGAL_2"/>
    <property type="match status" value="1"/>
</dbReference>
<gene>
    <name type="primary">GSM1</name>
    <name type="ORF">CAWG_00699</name>
</gene>
<organism>
    <name type="scientific">Candida albicans (strain WO-1)</name>
    <name type="common">Yeast</name>
    <dbReference type="NCBI Taxonomy" id="294748"/>
    <lineage>
        <taxon>Eukaryota</taxon>
        <taxon>Fungi</taxon>
        <taxon>Dikarya</taxon>
        <taxon>Ascomycota</taxon>
        <taxon>Saccharomycotina</taxon>
        <taxon>Pichiomycetes</taxon>
        <taxon>Debaryomycetaceae</taxon>
        <taxon>Candida/Lodderomyces clade</taxon>
        <taxon>Candida</taxon>
    </lineage>
</organism>
<feature type="chain" id="PRO_0000406480" description="Glucose starvation modulator protein 1">
    <location>
        <begin position="1"/>
        <end position="566"/>
    </location>
</feature>
<feature type="DNA-binding region" description="Zn(2)-C6 fungal-type" evidence="2">
    <location>
        <begin position="20"/>
        <end position="48"/>
    </location>
</feature>
<feature type="region of interest" description="Disordered" evidence="3">
    <location>
        <begin position="63"/>
        <end position="92"/>
    </location>
</feature>
<feature type="region of interest" description="Disordered" evidence="3">
    <location>
        <begin position="250"/>
        <end position="270"/>
    </location>
</feature>
<feature type="compositionally biased region" description="Low complexity" evidence="3">
    <location>
        <begin position="253"/>
        <end position="270"/>
    </location>
</feature>
<reference key="1">
    <citation type="journal article" date="2009" name="Nature">
        <title>Evolution of pathogenicity and sexual reproduction in eight Candida genomes.</title>
        <authorList>
            <person name="Butler G."/>
            <person name="Rasmussen M.D."/>
            <person name="Lin M.F."/>
            <person name="Santos M.A.S."/>
            <person name="Sakthikumar S."/>
            <person name="Munro C.A."/>
            <person name="Rheinbay E."/>
            <person name="Grabherr M."/>
            <person name="Forche A."/>
            <person name="Reedy J.L."/>
            <person name="Agrafioti I."/>
            <person name="Arnaud M.B."/>
            <person name="Bates S."/>
            <person name="Brown A.J.P."/>
            <person name="Brunke S."/>
            <person name="Costanzo M.C."/>
            <person name="Fitzpatrick D.A."/>
            <person name="de Groot P.W.J."/>
            <person name="Harris D."/>
            <person name="Hoyer L.L."/>
            <person name="Hube B."/>
            <person name="Klis F.M."/>
            <person name="Kodira C."/>
            <person name="Lennard N."/>
            <person name="Logue M.E."/>
            <person name="Martin R."/>
            <person name="Neiman A.M."/>
            <person name="Nikolaou E."/>
            <person name="Quail M.A."/>
            <person name="Quinn J."/>
            <person name="Santos M.C."/>
            <person name="Schmitzberger F.F."/>
            <person name="Sherlock G."/>
            <person name="Shah P."/>
            <person name="Silverstein K.A.T."/>
            <person name="Skrzypek M.S."/>
            <person name="Soll D."/>
            <person name="Staggs R."/>
            <person name="Stansfield I."/>
            <person name="Stumpf M.P.H."/>
            <person name="Sudbery P.E."/>
            <person name="Srikantha T."/>
            <person name="Zeng Q."/>
            <person name="Berman J."/>
            <person name="Berriman M."/>
            <person name="Heitman J."/>
            <person name="Gow N.A.R."/>
            <person name="Lorenz M.C."/>
            <person name="Birren B.W."/>
            <person name="Kellis M."/>
            <person name="Cuomo C.A."/>
        </authorList>
    </citation>
    <scope>NUCLEOTIDE SEQUENCE [LARGE SCALE GENOMIC DNA]</scope>
    <source>
        <strain>WO-1</strain>
    </source>
</reference>